<dbReference type="EC" id="7.4.2.8" evidence="1"/>
<dbReference type="EMBL" id="CP000381">
    <property type="protein sequence ID" value="ABX73610.1"/>
    <property type="molecule type" value="Genomic_DNA"/>
</dbReference>
<dbReference type="RefSeq" id="WP_002219009.1">
    <property type="nucleotide sequence ID" value="NC_010120.1"/>
</dbReference>
<dbReference type="SMR" id="A9M0X2"/>
<dbReference type="KEGG" id="nmn:NMCC_1444"/>
<dbReference type="HOGENOM" id="CLU_005314_3_0_4"/>
<dbReference type="Proteomes" id="UP000001177">
    <property type="component" value="Chromosome"/>
</dbReference>
<dbReference type="GO" id="GO:0031522">
    <property type="term" value="C:cell envelope Sec protein transport complex"/>
    <property type="evidence" value="ECO:0007669"/>
    <property type="project" value="TreeGrafter"/>
</dbReference>
<dbReference type="GO" id="GO:0005829">
    <property type="term" value="C:cytosol"/>
    <property type="evidence" value="ECO:0007669"/>
    <property type="project" value="TreeGrafter"/>
</dbReference>
<dbReference type="GO" id="GO:0005886">
    <property type="term" value="C:plasma membrane"/>
    <property type="evidence" value="ECO:0007669"/>
    <property type="project" value="UniProtKB-SubCell"/>
</dbReference>
<dbReference type="GO" id="GO:0005524">
    <property type="term" value="F:ATP binding"/>
    <property type="evidence" value="ECO:0007669"/>
    <property type="project" value="UniProtKB-UniRule"/>
</dbReference>
<dbReference type="GO" id="GO:0046872">
    <property type="term" value="F:metal ion binding"/>
    <property type="evidence" value="ECO:0007669"/>
    <property type="project" value="UniProtKB-KW"/>
</dbReference>
<dbReference type="GO" id="GO:0008564">
    <property type="term" value="F:protein-exporting ATPase activity"/>
    <property type="evidence" value="ECO:0007669"/>
    <property type="project" value="UniProtKB-EC"/>
</dbReference>
<dbReference type="GO" id="GO:0065002">
    <property type="term" value="P:intracellular protein transmembrane transport"/>
    <property type="evidence" value="ECO:0007669"/>
    <property type="project" value="UniProtKB-UniRule"/>
</dbReference>
<dbReference type="GO" id="GO:0017038">
    <property type="term" value="P:protein import"/>
    <property type="evidence" value="ECO:0007669"/>
    <property type="project" value="InterPro"/>
</dbReference>
<dbReference type="GO" id="GO:0006605">
    <property type="term" value="P:protein targeting"/>
    <property type="evidence" value="ECO:0007669"/>
    <property type="project" value="UniProtKB-UniRule"/>
</dbReference>
<dbReference type="GO" id="GO:0043952">
    <property type="term" value="P:protein transport by the Sec complex"/>
    <property type="evidence" value="ECO:0007669"/>
    <property type="project" value="TreeGrafter"/>
</dbReference>
<dbReference type="CDD" id="cd17928">
    <property type="entry name" value="DEXDc_SecA"/>
    <property type="match status" value="1"/>
</dbReference>
<dbReference type="CDD" id="cd18803">
    <property type="entry name" value="SF2_C_secA"/>
    <property type="match status" value="1"/>
</dbReference>
<dbReference type="FunFam" id="3.40.50.300:FF:000113">
    <property type="entry name" value="Preprotein translocase subunit SecA"/>
    <property type="match status" value="1"/>
</dbReference>
<dbReference type="FunFam" id="3.90.1440.10:FF:000001">
    <property type="entry name" value="Preprotein translocase subunit SecA"/>
    <property type="match status" value="1"/>
</dbReference>
<dbReference type="FunFam" id="1.10.3060.10:FF:000003">
    <property type="entry name" value="Protein translocase subunit SecA"/>
    <property type="match status" value="1"/>
</dbReference>
<dbReference type="FunFam" id="3.40.50.300:FF:000334">
    <property type="entry name" value="Protein translocase subunit SecA"/>
    <property type="match status" value="1"/>
</dbReference>
<dbReference type="Gene3D" id="1.10.3060.10">
    <property type="entry name" value="Helical scaffold and wing domains of SecA"/>
    <property type="match status" value="1"/>
</dbReference>
<dbReference type="Gene3D" id="3.40.50.300">
    <property type="entry name" value="P-loop containing nucleotide triphosphate hydrolases"/>
    <property type="match status" value="2"/>
</dbReference>
<dbReference type="Gene3D" id="3.90.1440.10">
    <property type="entry name" value="SecA, preprotein cross-linking domain"/>
    <property type="match status" value="1"/>
</dbReference>
<dbReference type="HAMAP" id="MF_01382">
    <property type="entry name" value="SecA"/>
    <property type="match status" value="1"/>
</dbReference>
<dbReference type="InterPro" id="IPR014001">
    <property type="entry name" value="Helicase_ATP-bd"/>
</dbReference>
<dbReference type="InterPro" id="IPR001650">
    <property type="entry name" value="Helicase_C-like"/>
</dbReference>
<dbReference type="InterPro" id="IPR027417">
    <property type="entry name" value="P-loop_NTPase"/>
</dbReference>
<dbReference type="InterPro" id="IPR004027">
    <property type="entry name" value="SEC_C_motif"/>
</dbReference>
<dbReference type="InterPro" id="IPR000185">
    <property type="entry name" value="SecA"/>
</dbReference>
<dbReference type="InterPro" id="IPR020937">
    <property type="entry name" value="SecA_CS"/>
</dbReference>
<dbReference type="InterPro" id="IPR011115">
    <property type="entry name" value="SecA_DEAD"/>
</dbReference>
<dbReference type="InterPro" id="IPR014018">
    <property type="entry name" value="SecA_motor_DEAD"/>
</dbReference>
<dbReference type="InterPro" id="IPR011130">
    <property type="entry name" value="SecA_preprotein_X-link_dom"/>
</dbReference>
<dbReference type="InterPro" id="IPR044722">
    <property type="entry name" value="SecA_SF2_C"/>
</dbReference>
<dbReference type="InterPro" id="IPR011116">
    <property type="entry name" value="SecA_Wing/Scaffold"/>
</dbReference>
<dbReference type="InterPro" id="IPR036266">
    <property type="entry name" value="SecA_Wing/Scaffold_sf"/>
</dbReference>
<dbReference type="InterPro" id="IPR036670">
    <property type="entry name" value="SecA_X-link_sf"/>
</dbReference>
<dbReference type="NCBIfam" id="NF009538">
    <property type="entry name" value="PRK12904.1"/>
    <property type="match status" value="1"/>
</dbReference>
<dbReference type="NCBIfam" id="TIGR00963">
    <property type="entry name" value="secA"/>
    <property type="match status" value="1"/>
</dbReference>
<dbReference type="PANTHER" id="PTHR30612:SF0">
    <property type="entry name" value="CHLOROPLAST PROTEIN-TRANSPORTING ATPASE"/>
    <property type="match status" value="1"/>
</dbReference>
<dbReference type="PANTHER" id="PTHR30612">
    <property type="entry name" value="SECA INNER MEMBRANE COMPONENT OF SEC PROTEIN SECRETION SYSTEM"/>
    <property type="match status" value="1"/>
</dbReference>
<dbReference type="Pfam" id="PF21090">
    <property type="entry name" value="P-loop_SecA"/>
    <property type="match status" value="1"/>
</dbReference>
<dbReference type="Pfam" id="PF02810">
    <property type="entry name" value="SEC-C"/>
    <property type="match status" value="1"/>
</dbReference>
<dbReference type="Pfam" id="PF07517">
    <property type="entry name" value="SecA_DEAD"/>
    <property type="match status" value="1"/>
</dbReference>
<dbReference type="Pfam" id="PF01043">
    <property type="entry name" value="SecA_PP_bind"/>
    <property type="match status" value="1"/>
</dbReference>
<dbReference type="Pfam" id="PF07516">
    <property type="entry name" value="SecA_SW"/>
    <property type="match status" value="1"/>
</dbReference>
<dbReference type="PRINTS" id="PR00906">
    <property type="entry name" value="SECA"/>
</dbReference>
<dbReference type="SMART" id="SM00957">
    <property type="entry name" value="SecA_DEAD"/>
    <property type="match status" value="1"/>
</dbReference>
<dbReference type="SMART" id="SM00958">
    <property type="entry name" value="SecA_PP_bind"/>
    <property type="match status" value="1"/>
</dbReference>
<dbReference type="SUPFAM" id="SSF81886">
    <property type="entry name" value="Helical scaffold and wing domains of SecA"/>
    <property type="match status" value="1"/>
</dbReference>
<dbReference type="SUPFAM" id="SSF52540">
    <property type="entry name" value="P-loop containing nucleoside triphosphate hydrolases"/>
    <property type="match status" value="2"/>
</dbReference>
<dbReference type="SUPFAM" id="SSF81767">
    <property type="entry name" value="Pre-protein crosslinking domain of SecA"/>
    <property type="match status" value="1"/>
</dbReference>
<dbReference type="PROSITE" id="PS01312">
    <property type="entry name" value="SECA"/>
    <property type="match status" value="1"/>
</dbReference>
<dbReference type="PROSITE" id="PS51196">
    <property type="entry name" value="SECA_MOTOR_DEAD"/>
    <property type="match status" value="1"/>
</dbReference>
<gene>
    <name evidence="1" type="primary">secA</name>
    <name type="ordered locus">NMCC_1444</name>
</gene>
<protein>
    <recommendedName>
        <fullName evidence="1">Protein translocase subunit SecA</fullName>
        <ecNumber evidence="1">7.4.2.8</ecNumber>
    </recommendedName>
</protein>
<accession>A9M0X2</accession>
<reference key="1">
    <citation type="journal article" date="2008" name="Genomics">
        <title>Characterization of ST-4821 complex, a unique Neisseria meningitidis clone.</title>
        <authorList>
            <person name="Peng J."/>
            <person name="Yang L."/>
            <person name="Yang F."/>
            <person name="Yang J."/>
            <person name="Yan Y."/>
            <person name="Nie H."/>
            <person name="Zhang X."/>
            <person name="Xiong Z."/>
            <person name="Jiang Y."/>
            <person name="Cheng F."/>
            <person name="Xu X."/>
            <person name="Chen S."/>
            <person name="Sun L."/>
            <person name="Li W."/>
            <person name="Shen Y."/>
            <person name="Shao Z."/>
            <person name="Liang X."/>
            <person name="Xu J."/>
            <person name="Jin Q."/>
        </authorList>
    </citation>
    <scope>NUCLEOTIDE SEQUENCE [LARGE SCALE GENOMIC DNA]</scope>
    <source>
        <strain>053442</strain>
    </source>
</reference>
<sequence>MLTNIAKKIFGSRNDRLLKQYRKSVARINALEEQMQALSDADLQAKTAEFKQRLADGQTLDGILPEAFAVCREASRRTLGMRHFDVQLIGGMVLHDGKIAEMRTGEGKTLVATLAVYLNALAGKGVHVVTVNDYLASRDAGIMEPLYNFLGLTVGVIISDMQPFDRQNAYAADITYGTNNEFGFDYLRDNMVTDQYDKVQRELNFAVVDEVDSILIDEARTPLIISGQADDNIQLYQIMNTVPPHLVRQETEEGEGDYWVDEKAHQVILSEAGHEHAEQILTQMGLLAENDSLYSAANIALMHHLMAALRAHSLFHKDQHYVIQDGEIVIVDEFTGRLMSGRRWSEGLHQAVEAKEGVEIKRENQTLASITFQNYFRLYTKLSGMTGTADTEAFEFQSIYNLETVIIPTNRPVQRKDFNDQIFRSAEEKFEAVVKDIEECHKRGQPVLVGTTSIENSELVSHLLQKAGLPHNVLNAKEHEREALIVAQAGKVGAITVATNMAGRGTDIVLGGNLKHQTDAIRADETLSDEEKQAQIAALENGWQAEHDKVMEAGGLHIIGTERHESRRIDNQLRGRSGRQGDPGSSRFYLSFEDPLLRLFALDRAAAILNRLAPERGVAIEHNLLTRQIEGAQRKVEGRNFDMRKQVLEYDDVANEQRKVIYSQRNEILTSKDISDLMQEIRSDVVSDLVDTYMPPDSMEEQWDIPTLENRLAAEFRLHEDIQSWLKADNAIDGQDIKERLIERIENEYAAKTELVGKQAMADFERNVMLQVIDNQWREHLAAMDYLRQGIHLRSYAQKNPKQEYKREAFTMFQDLWNGIKFHIASLLTSVQIEQNPVAVVEEQPIGNIQSIHSESPDMEELLGQSQTDLVTEAFNPDGTDFSPEALEARGQIVHRNDPCPCGSGLKYKQCHGKLA</sequence>
<organism>
    <name type="scientific">Neisseria meningitidis serogroup C (strain 053442)</name>
    <dbReference type="NCBI Taxonomy" id="374833"/>
    <lineage>
        <taxon>Bacteria</taxon>
        <taxon>Pseudomonadati</taxon>
        <taxon>Pseudomonadota</taxon>
        <taxon>Betaproteobacteria</taxon>
        <taxon>Neisseriales</taxon>
        <taxon>Neisseriaceae</taxon>
        <taxon>Neisseria</taxon>
    </lineage>
</organism>
<proteinExistence type="inferred from homology"/>
<evidence type="ECO:0000255" key="1">
    <source>
        <dbReference type="HAMAP-Rule" id="MF_01382"/>
    </source>
</evidence>
<keyword id="KW-0067">ATP-binding</keyword>
<keyword id="KW-0997">Cell inner membrane</keyword>
<keyword id="KW-1003">Cell membrane</keyword>
<keyword id="KW-0963">Cytoplasm</keyword>
<keyword id="KW-0472">Membrane</keyword>
<keyword id="KW-0479">Metal-binding</keyword>
<keyword id="KW-0547">Nucleotide-binding</keyword>
<keyword id="KW-0653">Protein transport</keyword>
<keyword id="KW-1278">Translocase</keyword>
<keyword id="KW-0811">Translocation</keyword>
<keyword id="KW-0813">Transport</keyword>
<keyword id="KW-0862">Zinc</keyword>
<name>SECA_NEIM0</name>
<feature type="chain" id="PRO_1000087322" description="Protein translocase subunit SecA">
    <location>
        <begin position="1"/>
        <end position="916"/>
    </location>
</feature>
<feature type="binding site" evidence="1">
    <location>
        <position position="87"/>
    </location>
    <ligand>
        <name>ATP</name>
        <dbReference type="ChEBI" id="CHEBI:30616"/>
    </ligand>
</feature>
<feature type="binding site" evidence="1">
    <location>
        <begin position="105"/>
        <end position="109"/>
    </location>
    <ligand>
        <name>ATP</name>
        <dbReference type="ChEBI" id="CHEBI:30616"/>
    </ligand>
</feature>
<feature type="binding site" evidence="1">
    <location>
        <position position="507"/>
    </location>
    <ligand>
        <name>ATP</name>
        <dbReference type="ChEBI" id="CHEBI:30616"/>
    </ligand>
</feature>
<feature type="binding site" evidence="1">
    <location>
        <position position="900"/>
    </location>
    <ligand>
        <name>Zn(2+)</name>
        <dbReference type="ChEBI" id="CHEBI:29105"/>
    </ligand>
</feature>
<feature type="binding site" evidence="1">
    <location>
        <position position="902"/>
    </location>
    <ligand>
        <name>Zn(2+)</name>
        <dbReference type="ChEBI" id="CHEBI:29105"/>
    </ligand>
</feature>
<feature type="binding site" evidence="1">
    <location>
        <position position="911"/>
    </location>
    <ligand>
        <name>Zn(2+)</name>
        <dbReference type="ChEBI" id="CHEBI:29105"/>
    </ligand>
</feature>
<feature type="binding site" evidence="1">
    <location>
        <position position="912"/>
    </location>
    <ligand>
        <name>Zn(2+)</name>
        <dbReference type="ChEBI" id="CHEBI:29105"/>
    </ligand>
</feature>
<comment type="function">
    <text evidence="1">Part of the Sec protein translocase complex. Interacts with the SecYEG preprotein conducting channel. Has a central role in coupling the hydrolysis of ATP to the transfer of proteins into and across the cell membrane, serving both as a receptor for the preprotein-SecB complex and as an ATP-driven molecular motor driving the stepwise translocation of polypeptide chains across the membrane.</text>
</comment>
<comment type="catalytic activity">
    <reaction evidence="1">
        <text>ATP + H2O + cellular proteinSide 1 = ADP + phosphate + cellular proteinSide 2.</text>
        <dbReference type="EC" id="7.4.2.8"/>
    </reaction>
</comment>
<comment type="cofactor">
    <cofactor evidence="1">
        <name>Zn(2+)</name>
        <dbReference type="ChEBI" id="CHEBI:29105"/>
    </cofactor>
    <text evidence="1">May bind 1 zinc ion per subunit.</text>
</comment>
<comment type="subunit">
    <text evidence="1">Monomer and homodimer. Part of the essential Sec protein translocation apparatus which comprises SecA, SecYEG and auxiliary proteins SecDF-YajC and YidC.</text>
</comment>
<comment type="subcellular location">
    <subcellularLocation>
        <location evidence="1">Cell inner membrane</location>
        <topology evidence="1">Peripheral membrane protein</topology>
        <orientation evidence="1">Cytoplasmic side</orientation>
    </subcellularLocation>
    <subcellularLocation>
        <location evidence="1">Cytoplasm</location>
    </subcellularLocation>
    <text evidence="1">Distribution is 50-50.</text>
</comment>
<comment type="similarity">
    <text evidence="1">Belongs to the SecA family.</text>
</comment>